<comment type="function">
    <text evidence="1 3">Catalyzes the synthesis of dihydrouridine, a modified base found in the D-loop of most tRNAs (PubMed:14970222). Specifically modifies U20a and U20b in cytoplasmic tRNAs (PubMed:14970222). Also able to mediate dihydrouridylation of some mRNAs, thereby affecting their translation (By similarity).</text>
</comment>
<comment type="catalytic activity">
    <reaction evidence="3">
        <text>5,6-dihydrouridine(20a) in tRNA + NADP(+) = uridine(20a) in tRNA + NADPH + H(+)</text>
        <dbReference type="Rhea" id="RHEA:53344"/>
        <dbReference type="Rhea" id="RHEA-COMP:13535"/>
        <dbReference type="Rhea" id="RHEA-COMP:13536"/>
        <dbReference type="ChEBI" id="CHEBI:15378"/>
        <dbReference type="ChEBI" id="CHEBI:57783"/>
        <dbReference type="ChEBI" id="CHEBI:58349"/>
        <dbReference type="ChEBI" id="CHEBI:65315"/>
        <dbReference type="ChEBI" id="CHEBI:74443"/>
        <dbReference type="EC" id="1.3.1.90"/>
    </reaction>
    <physiologicalReaction direction="right-to-left" evidence="3">
        <dbReference type="Rhea" id="RHEA:53346"/>
    </physiologicalReaction>
</comment>
<comment type="catalytic activity">
    <reaction evidence="3">
        <text>5,6-dihydrouridine(20a) in tRNA + NAD(+) = uridine(20a) in tRNA + NADH + H(+)</text>
        <dbReference type="Rhea" id="RHEA:53348"/>
        <dbReference type="Rhea" id="RHEA-COMP:13535"/>
        <dbReference type="Rhea" id="RHEA-COMP:13536"/>
        <dbReference type="ChEBI" id="CHEBI:15378"/>
        <dbReference type="ChEBI" id="CHEBI:57540"/>
        <dbReference type="ChEBI" id="CHEBI:57945"/>
        <dbReference type="ChEBI" id="CHEBI:65315"/>
        <dbReference type="ChEBI" id="CHEBI:74443"/>
        <dbReference type="EC" id="1.3.1.90"/>
    </reaction>
    <physiologicalReaction direction="right-to-left" evidence="3">
        <dbReference type="Rhea" id="RHEA:53350"/>
    </physiologicalReaction>
</comment>
<comment type="catalytic activity">
    <reaction evidence="3">
        <text>5,6-dihydrouridine(20b) in tRNA + NAD(+) = uridine(20b) in tRNA + NADH + H(+)</text>
        <dbReference type="Rhea" id="RHEA:53352"/>
        <dbReference type="Rhea" id="RHEA-COMP:13537"/>
        <dbReference type="Rhea" id="RHEA-COMP:13538"/>
        <dbReference type="ChEBI" id="CHEBI:15378"/>
        <dbReference type="ChEBI" id="CHEBI:57540"/>
        <dbReference type="ChEBI" id="CHEBI:57945"/>
        <dbReference type="ChEBI" id="CHEBI:65315"/>
        <dbReference type="ChEBI" id="CHEBI:74443"/>
        <dbReference type="EC" id="1.3.1.90"/>
    </reaction>
    <physiologicalReaction direction="right-to-left" evidence="3">
        <dbReference type="Rhea" id="RHEA:53354"/>
    </physiologicalReaction>
</comment>
<comment type="catalytic activity">
    <reaction evidence="3">
        <text>5,6-dihydrouridine(20b) in tRNA + NADP(+) = uridine(20b) in tRNA + NADPH + H(+)</text>
        <dbReference type="Rhea" id="RHEA:53356"/>
        <dbReference type="Rhea" id="RHEA-COMP:13537"/>
        <dbReference type="Rhea" id="RHEA-COMP:13538"/>
        <dbReference type="ChEBI" id="CHEBI:15378"/>
        <dbReference type="ChEBI" id="CHEBI:57783"/>
        <dbReference type="ChEBI" id="CHEBI:58349"/>
        <dbReference type="ChEBI" id="CHEBI:65315"/>
        <dbReference type="ChEBI" id="CHEBI:74443"/>
        <dbReference type="EC" id="1.3.1.90"/>
    </reaction>
    <physiologicalReaction direction="right-to-left" evidence="3">
        <dbReference type="Rhea" id="RHEA:53358"/>
    </physiologicalReaction>
</comment>
<comment type="catalytic activity">
    <reaction evidence="1">
        <text>a 5,6-dihydrouridine in mRNA + NAD(+) = a uridine in mRNA + NADH + H(+)</text>
        <dbReference type="Rhea" id="RHEA:69851"/>
        <dbReference type="Rhea" id="RHEA-COMP:14658"/>
        <dbReference type="Rhea" id="RHEA-COMP:17789"/>
        <dbReference type="ChEBI" id="CHEBI:15378"/>
        <dbReference type="ChEBI" id="CHEBI:57540"/>
        <dbReference type="ChEBI" id="CHEBI:57945"/>
        <dbReference type="ChEBI" id="CHEBI:65315"/>
        <dbReference type="ChEBI" id="CHEBI:74443"/>
    </reaction>
    <physiologicalReaction direction="right-to-left" evidence="1">
        <dbReference type="Rhea" id="RHEA:69853"/>
    </physiologicalReaction>
</comment>
<comment type="catalytic activity">
    <reaction evidence="1">
        <text>a 5,6-dihydrouridine in mRNA + NADP(+) = a uridine in mRNA + NADPH + H(+)</text>
        <dbReference type="Rhea" id="RHEA:69855"/>
        <dbReference type="Rhea" id="RHEA-COMP:14658"/>
        <dbReference type="Rhea" id="RHEA-COMP:17789"/>
        <dbReference type="ChEBI" id="CHEBI:15378"/>
        <dbReference type="ChEBI" id="CHEBI:57783"/>
        <dbReference type="ChEBI" id="CHEBI:58349"/>
        <dbReference type="ChEBI" id="CHEBI:65315"/>
        <dbReference type="ChEBI" id="CHEBI:74443"/>
    </reaction>
    <physiologicalReaction direction="right-to-left" evidence="1">
        <dbReference type="Rhea" id="RHEA:69857"/>
    </physiologicalReaction>
</comment>
<comment type="cofactor">
    <cofactor evidence="2">
        <name>FMN</name>
        <dbReference type="ChEBI" id="CHEBI:58210"/>
    </cofactor>
</comment>
<comment type="interaction">
    <interactant intactId="EBI-2343661">
        <id>Q06063</id>
    </interactant>
    <interactant intactId="EBI-38045">
        <id>Q02872</id>
        <label>YPL108W</label>
    </interactant>
    <organismsDiffer>false</organismsDiffer>
    <experiments>2</experiments>
</comment>
<comment type="similarity">
    <text evidence="5">Belongs to the Dus family. Dus4 subfamily.</text>
</comment>
<reference key="1">
    <citation type="journal article" date="1997" name="Nature">
        <title>The nucleotide sequence of Saccharomyces cerevisiae chromosome XII.</title>
        <authorList>
            <person name="Johnston M."/>
            <person name="Hillier L.W."/>
            <person name="Riles L."/>
            <person name="Albermann K."/>
            <person name="Andre B."/>
            <person name="Ansorge W."/>
            <person name="Benes V."/>
            <person name="Brueckner M."/>
            <person name="Delius H."/>
            <person name="Dubois E."/>
            <person name="Duesterhoeft A."/>
            <person name="Entian K.-D."/>
            <person name="Floeth M."/>
            <person name="Goffeau A."/>
            <person name="Hebling U."/>
            <person name="Heumann K."/>
            <person name="Heuss-Neitzel D."/>
            <person name="Hilbert H."/>
            <person name="Hilger F."/>
            <person name="Kleine K."/>
            <person name="Koetter P."/>
            <person name="Louis E.J."/>
            <person name="Messenguy F."/>
            <person name="Mewes H.-W."/>
            <person name="Miosga T."/>
            <person name="Moestl D."/>
            <person name="Mueller-Auer S."/>
            <person name="Nentwich U."/>
            <person name="Obermaier B."/>
            <person name="Piravandi E."/>
            <person name="Pohl T.M."/>
            <person name="Portetelle D."/>
            <person name="Purnelle B."/>
            <person name="Rechmann S."/>
            <person name="Rieger M."/>
            <person name="Rinke M."/>
            <person name="Rose M."/>
            <person name="Scharfe M."/>
            <person name="Scherens B."/>
            <person name="Scholler P."/>
            <person name="Schwager C."/>
            <person name="Schwarz S."/>
            <person name="Underwood A.P."/>
            <person name="Urrestarazu L.A."/>
            <person name="Vandenbol M."/>
            <person name="Verhasselt P."/>
            <person name="Vierendeels F."/>
            <person name="Voet M."/>
            <person name="Volckaert G."/>
            <person name="Voss H."/>
            <person name="Wambutt R."/>
            <person name="Wedler E."/>
            <person name="Wedler H."/>
            <person name="Zimmermann F.K."/>
            <person name="Zollner A."/>
            <person name="Hani J."/>
            <person name="Hoheisel J.D."/>
        </authorList>
    </citation>
    <scope>NUCLEOTIDE SEQUENCE [LARGE SCALE GENOMIC DNA]</scope>
    <source>
        <strain>ATCC 204508 / S288c</strain>
    </source>
</reference>
<reference key="2">
    <citation type="journal article" date="2014" name="G3 (Bethesda)">
        <title>The reference genome sequence of Saccharomyces cerevisiae: Then and now.</title>
        <authorList>
            <person name="Engel S.R."/>
            <person name="Dietrich F.S."/>
            <person name="Fisk D.G."/>
            <person name="Binkley G."/>
            <person name="Balakrishnan R."/>
            <person name="Costanzo M.C."/>
            <person name="Dwight S.S."/>
            <person name="Hitz B.C."/>
            <person name="Karra K."/>
            <person name="Nash R.S."/>
            <person name="Weng S."/>
            <person name="Wong E.D."/>
            <person name="Lloyd P."/>
            <person name="Skrzypek M.S."/>
            <person name="Miyasato S.R."/>
            <person name="Simison M."/>
            <person name="Cherry J.M."/>
        </authorList>
    </citation>
    <scope>GENOME REANNOTATION</scope>
    <source>
        <strain>ATCC 204508 / S288c</strain>
    </source>
</reference>
<reference key="3">
    <citation type="journal article" date="2007" name="Genome Res.">
        <title>Approaching a complete repository of sequence-verified protein-encoding clones for Saccharomyces cerevisiae.</title>
        <authorList>
            <person name="Hu Y."/>
            <person name="Rolfs A."/>
            <person name="Bhullar B."/>
            <person name="Murthy T.V.S."/>
            <person name="Zhu C."/>
            <person name="Berger M.F."/>
            <person name="Camargo A.A."/>
            <person name="Kelley F."/>
            <person name="McCarron S."/>
            <person name="Jepson D."/>
            <person name="Richardson A."/>
            <person name="Raphael J."/>
            <person name="Moreira D."/>
            <person name="Taycher E."/>
            <person name="Zuo D."/>
            <person name="Mohr S."/>
            <person name="Kane M.F."/>
            <person name="Williamson J."/>
            <person name="Simpson A.J.G."/>
            <person name="Bulyk M.L."/>
            <person name="Harlow E."/>
            <person name="Marsischky G."/>
            <person name="Kolodner R.D."/>
            <person name="LaBaer J."/>
        </authorList>
    </citation>
    <scope>NUCLEOTIDE SEQUENCE [GENOMIC DNA]</scope>
    <source>
        <strain>ATCC 204508 / S288c</strain>
    </source>
</reference>
<reference key="4">
    <citation type="journal article" date="2003" name="Nature">
        <title>Global analysis of protein expression in yeast.</title>
        <authorList>
            <person name="Ghaemmaghami S."/>
            <person name="Huh W.-K."/>
            <person name="Bower K."/>
            <person name="Howson R.W."/>
            <person name="Belle A."/>
            <person name="Dephoure N."/>
            <person name="O'Shea E.K."/>
            <person name="Weissman J.S."/>
        </authorList>
    </citation>
    <scope>LEVEL OF PROTEIN EXPRESSION [LARGE SCALE ANALYSIS]</scope>
</reference>
<reference key="5">
    <citation type="journal article" date="2004" name="J. Biol. Chem.">
        <title>The specificities of four yeast dihydrouridine synthases for cytoplasmic tRNAs.</title>
        <authorList>
            <person name="Xing F."/>
            <person name="Hiley S.L."/>
            <person name="Hughes T.R."/>
            <person name="Phizicky E.M."/>
        </authorList>
    </citation>
    <scope>FUNCTION</scope>
    <scope>CATALYTIC ACTIVITY</scope>
</reference>
<dbReference type="EC" id="1.3.1.90" evidence="3"/>
<dbReference type="EC" id="1.3.1.-" evidence="1"/>
<dbReference type="EMBL" id="U19729">
    <property type="protein sequence ID" value="AAB82341.1"/>
    <property type="molecule type" value="Genomic_DNA"/>
</dbReference>
<dbReference type="EMBL" id="AY558586">
    <property type="protein sequence ID" value="AAS56912.1"/>
    <property type="molecule type" value="Genomic_DNA"/>
</dbReference>
<dbReference type="EMBL" id="BK006945">
    <property type="protein sequence ID" value="DAA09704.1"/>
    <property type="molecule type" value="Genomic_DNA"/>
</dbReference>
<dbReference type="PIR" id="S55961">
    <property type="entry name" value="S55961"/>
</dbReference>
<dbReference type="RefSeq" id="NP_013509.1">
    <property type="nucleotide sequence ID" value="NM_001182293.1"/>
</dbReference>
<dbReference type="SMR" id="Q06063"/>
<dbReference type="BioGRID" id="31662">
    <property type="interactions" value="49"/>
</dbReference>
<dbReference type="FunCoup" id="Q06063">
    <property type="interactions" value="168"/>
</dbReference>
<dbReference type="IntAct" id="Q06063">
    <property type="interactions" value="1"/>
</dbReference>
<dbReference type="STRING" id="4932.YLR405W"/>
<dbReference type="iPTMnet" id="Q06063"/>
<dbReference type="PaxDb" id="4932-YLR405W"/>
<dbReference type="PeptideAtlas" id="Q06063"/>
<dbReference type="EnsemblFungi" id="YLR405W_mRNA">
    <property type="protein sequence ID" value="YLR405W"/>
    <property type="gene ID" value="YLR405W"/>
</dbReference>
<dbReference type="GeneID" id="851121"/>
<dbReference type="KEGG" id="sce:YLR405W"/>
<dbReference type="AGR" id="SGD:S000004397"/>
<dbReference type="SGD" id="S000004397">
    <property type="gene designation" value="DUS4"/>
</dbReference>
<dbReference type="VEuPathDB" id="FungiDB:YLR405W"/>
<dbReference type="eggNOG" id="KOG2335">
    <property type="taxonomic scope" value="Eukaryota"/>
</dbReference>
<dbReference type="GeneTree" id="ENSGT00550000074907"/>
<dbReference type="HOGENOM" id="CLU_013299_4_0_1"/>
<dbReference type="InParanoid" id="Q06063"/>
<dbReference type="OMA" id="QRPHHDI"/>
<dbReference type="OrthoDB" id="9977870at2759"/>
<dbReference type="BioCyc" id="MetaCyc:G3O-32467-MONOMER"/>
<dbReference type="BioCyc" id="YEAST:G3O-32467-MONOMER"/>
<dbReference type="BRENDA" id="1.3.1.90">
    <property type="organism ID" value="984"/>
</dbReference>
<dbReference type="BioGRID-ORCS" id="851121">
    <property type="hits" value="1 hit in 10 CRISPR screens"/>
</dbReference>
<dbReference type="PRO" id="PR:Q06063"/>
<dbReference type="Proteomes" id="UP000002311">
    <property type="component" value="Chromosome XII"/>
</dbReference>
<dbReference type="RNAct" id="Q06063">
    <property type="molecule type" value="protein"/>
</dbReference>
<dbReference type="GO" id="GO:0050660">
    <property type="term" value="F:flavin adenine dinucleotide binding"/>
    <property type="evidence" value="ECO:0007669"/>
    <property type="project" value="InterPro"/>
</dbReference>
<dbReference type="GO" id="GO:0106414">
    <property type="term" value="F:mRNA dihydrouridine synthase activity"/>
    <property type="evidence" value="ECO:0007669"/>
    <property type="project" value="RHEA"/>
</dbReference>
<dbReference type="GO" id="GO:0017150">
    <property type="term" value="F:tRNA dihydrouridine synthase activity"/>
    <property type="evidence" value="ECO:0000315"/>
    <property type="project" value="SGD"/>
</dbReference>
<dbReference type="GO" id="GO:0102266">
    <property type="term" value="F:tRNA-dihydrouridine20a synthase activity"/>
    <property type="evidence" value="ECO:0000315"/>
    <property type="project" value="FlyBase"/>
</dbReference>
<dbReference type="GO" id="GO:0102267">
    <property type="term" value="F:tRNA-dihydrouridine20b synthase activity"/>
    <property type="evidence" value="ECO:0000315"/>
    <property type="project" value="FlyBase"/>
</dbReference>
<dbReference type="GO" id="GO:0006397">
    <property type="term" value="P:mRNA processing"/>
    <property type="evidence" value="ECO:0007669"/>
    <property type="project" value="UniProtKB-KW"/>
</dbReference>
<dbReference type="GO" id="GO:0006400">
    <property type="term" value="P:tRNA modification"/>
    <property type="evidence" value="ECO:0000315"/>
    <property type="project" value="SGD"/>
</dbReference>
<dbReference type="CDD" id="cd02801">
    <property type="entry name" value="DUS_like_FMN"/>
    <property type="match status" value="1"/>
</dbReference>
<dbReference type="FunFam" id="3.20.20.70:FF:000159">
    <property type="entry name" value="tRNA-dihydrouridine synthase 4"/>
    <property type="match status" value="1"/>
</dbReference>
<dbReference type="Gene3D" id="3.20.20.70">
    <property type="entry name" value="Aldolase class I"/>
    <property type="match status" value="1"/>
</dbReference>
<dbReference type="InterPro" id="IPR013785">
    <property type="entry name" value="Aldolase_TIM"/>
</dbReference>
<dbReference type="InterPro" id="IPR035587">
    <property type="entry name" value="DUS-like_FMN-bd"/>
</dbReference>
<dbReference type="InterPro" id="IPR001269">
    <property type="entry name" value="DUS_fam"/>
</dbReference>
<dbReference type="InterPro" id="IPR018517">
    <property type="entry name" value="tRNA_hU_synthase_CS"/>
</dbReference>
<dbReference type="PANTHER" id="PTHR11082">
    <property type="entry name" value="TRNA-DIHYDROURIDINE SYNTHASE"/>
    <property type="match status" value="1"/>
</dbReference>
<dbReference type="PANTHER" id="PTHR11082:SF31">
    <property type="entry name" value="TRNA-DIHYDROURIDINE(20A_20B) SYNTHASE [NAD(P)+]-LIKE"/>
    <property type="match status" value="1"/>
</dbReference>
<dbReference type="Pfam" id="PF01207">
    <property type="entry name" value="Dus"/>
    <property type="match status" value="1"/>
</dbReference>
<dbReference type="PIRSF" id="PIRSF006621">
    <property type="entry name" value="Dus"/>
    <property type="match status" value="1"/>
</dbReference>
<dbReference type="SUPFAM" id="SSF51395">
    <property type="entry name" value="FMN-linked oxidoreductases"/>
    <property type="match status" value="1"/>
</dbReference>
<dbReference type="PROSITE" id="PS01136">
    <property type="entry name" value="UPF0034"/>
    <property type="match status" value="1"/>
</dbReference>
<proteinExistence type="evidence at protein level"/>
<keyword id="KW-0285">Flavoprotein</keyword>
<keyword id="KW-0288">FMN</keyword>
<keyword id="KW-0507">mRNA processing</keyword>
<keyword id="KW-0520">NAD</keyword>
<keyword id="KW-0521">NADP</keyword>
<keyword id="KW-0560">Oxidoreductase</keyword>
<keyword id="KW-1185">Reference proteome</keyword>
<keyword id="KW-0819">tRNA processing</keyword>
<accession>Q06063</accession>
<accession>D6VZ38</accession>
<gene>
    <name evidence="4 6" type="primary">DUS4</name>
    <name type="ordered locus">YLR405W</name>
    <name type="ORF">L8084.2</name>
</gene>
<protein>
    <recommendedName>
        <fullName>tRNA-dihydrouridine(20a/20b) synthase [NAD(P)+]</fullName>
        <ecNumber evidence="3">1.3.1.90</ecNumber>
    </recommendedName>
    <alternativeName>
        <fullName evidence="5">mRNA-dihydrouridine synthase DUS4</fullName>
        <ecNumber evidence="1">1.3.1.-</ecNumber>
    </alternativeName>
    <alternativeName>
        <fullName>tRNA-dihydrouridine synthase 4</fullName>
    </alternativeName>
</protein>
<organism>
    <name type="scientific">Saccharomyces cerevisiae (strain ATCC 204508 / S288c)</name>
    <name type="common">Baker's yeast</name>
    <dbReference type="NCBI Taxonomy" id="559292"/>
    <lineage>
        <taxon>Eukaryota</taxon>
        <taxon>Fungi</taxon>
        <taxon>Dikarya</taxon>
        <taxon>Ascomycota</taxon>
        <taxon>Saccharomycotina</taxon>
        <taxon>Saccharomycetes</taxon>
        <taxon>Saccharomycetales</taxon>
        <taxon>Saccharomycetaceae</taxon>
        <taxon>Saccharomyces</taxon>
    </lineage>
</organism>
<evidence type="ECO:0000250" key="1">
    <source>
        <dbReference type="UniProtKB" id="O74553"/>
    </source>
</evidence>
<evidence type="ECO:0000250" key="2">
    <source>
        <dbReference type="UniProtKB" id="Q5SMC7"/>
    </source>
</evidence>
<evidence type="ECO:0000269" key="3">
    <source>
    </source>
</evidence>
<evidence type="ECO:0000303" key="4">
    <source>
    </source>
</evidence>
<evidence type="ECO:0000305" key="5"/>
<evidence type="ECO:0000312" key="6">
    <source>
        <dbReference type="SGD" id="S000004397"/>
    </source>
</evidence>
<sequence length="367" mass="41696">MHTMHIPSGDVLIPKPKLITEETDPLHIIKTRQKTHGRPVTIAGPMVRYSKLPFRQLCREYNVDIVYSPMILAREYVRNEHARISDLSTNNEDTPLIVQVGVNNVADLLKFVEMVAPYCDGIGINCGCPIKEQIREGIGCALIYNSDLLCSMVHAVKDKYGDKLRIETKIRIHEALDETVELCRKLCDAGVDWITIHGRTRRTRSSQPANLDAIKYIIENISDKNVPVIANGDCFKLSDLERITKYTGAHGVMAVRGLLSNPALFAGYTTCPWGCIEKFCYWALEFGGLPFQLAQHHLYCMLENMELKKSLLKKMMNLKNYISLIDWFNKTFEFKRYGEDGFGMGVEIPYKANSCVQRSASVVERQE</sequence>
<feature type="chain" id="PRO_0000162156" description="tRNA-dihydrouridine(20a/20b) synthase [NAD(P)+]">
    <location>
        <begin position="1"/>
        <end position="367"/>
    </location>
</feature>
<feature type="active site" description="Proton donor" evidence="2">
    <location>
        <position position="128"/>
    </location>
</feature>
<feature type="binding site" evidence="2">
    <location>
        <begin position="45"/>
        <end position="47"/>
    </location>
    <ligand>
        <name>FMN</name>
        <dbReference type="ChEBI" id="CHEBI:58210"/>
    </ligand>
</feature>
<feature type="binding site" evidence="2">
    <location>
        <position position="99"/>
    </location>
    <ligand>
        <name>FMN</name>
        <dbReference type="ChEBI" id="CHEBI:58210"/>
    </ligand>
</feature>
<feature type="binding site" evidence="2">
    <location>
        <position position="169"/>
    </location>
    <ligand>
        <name>FMN</name>
        <dbReference type="ChEBI" id="CHEBI:58210"/>
    </ligand>
</feature>
<feature type="binding site" evidence="2">
    <location>
        <position position="197"/>
    </location>
    <ligand>
        <name>FMN</name>
        <dbReference type="ChEBI" id="CHEBI:58210"/>
    </ligand>
</feature>
<feature type="binding site" evidence="2">
    <location>
        <begin position="231"/>
        <end position="233"/>
    </location>
    <ligand>
        <name>FMN</name>
        <dbReference type="ChEBI" id="CHEBI:58210"/>
    </ligand>
</feature>
<feature type="binding site" evidence="2">
    <location>
        <begin position="255"/>
        <end position="256"/>
    </location>
    <ligand>
        <name>FMN</name>
        <dbReference type="ChEBI" id="CHEBI:58210"/>
    </ligand>
</feature>
<name>DUS4_YEAST</name>